<proteinExistence type="inferred from homology"/>
<evidence type="ECO:0000255" key="1">
    <source>
        <dbReference type="HAMAP-Rule" id="MF_00178"/>
    </source>
</evidence>
<organism>
    <name type="scientific">Aliivibrio fischeri</name>
    <name type="common">Vibrio fischeri</name>
    <dbReference type="NCBI Taxonomy" id="668"/>
    <lineage>
        <taxon>Bacteria</taxon>
        <taxon>Pseudomonadati</taxon>
        <taxon>Pseudomonadota</taxon>
        <taxon>Gammaproteobacteria</taxon>
        <taxon>Vibrionales</taxon>
        <taxon>Vibrionaceae</taxon>
        <taxon>Aliivibrio</taxon>
    </lineage>
</organism>
<name>RISB_ALIFS</name>
<protein>
    <recommendedName>
        <fullName evidence="1">6,7-dimethyl-8-ribityllumazine synthase</fullName>
        <shortName evidence="1">DMRL synthase</shortName>
        <shortName evidence="1">LS</shortName>
        <shortName evidence="1">Lumazine synthase</shortName>
        <ecNumber evidence="1">2.5.1.78</ecNumber>
    </recommendedName>
</protein>
<keyword id="KW-0686">Riboflavin biosynthesis</keyword>
<keyword id="KW-0808">Transferase</keyword>
<feature type="chain" id="PRO_0000134827" description="6,7-dimethyl-8-ribityllumazine synthase">
    <location>
        <begin position="1"/>
        <end position="156"/>
    </location>
</feature>
<feature type="active site" description="Proton donor" evidence="1">
    <location>
        <position position="89"/>
    </location>
</feature>
<feature type="binding site" evidence="1">
    <location>
        <position position="22"/>
    </location>
    <ligand>
        <name>5-amino-6-(D-ribitylamino)uracil</name>
        <dbReference type="ChEBI" id="CHEBI:15934"/>
    </ligand>
</feature>
<feature type="binding site" evidence="1">
    <location>
        <begin position="57"/>
        <end position="59"/>
    </location>
    <ligand>
        <name>5-amino-6-(D-ribitylamino)uracil</name>
        <dbReference type="ChEBI" id="CHEBI:15934"/>
    </ligand>
</feature>
<feature type="binding site" evidence="1">
    <location>
        <begin position="81"/>
        <end position="83"/>
    </location>
    <ligand>
        <name>5-amino-6-(D-ribitylamino)uracil</name>
        <dbReference type="ChEBI" id="CHEBI:15934"/>
    </ligand>
</feature>
<feature type="binding site" evidence="1">
    <location>
        <begin position="86"/>
        <end position="87"/>
    </location>
    <ligand>
        <name>(2S)-2-hydroxy-3-oxobutyl phosphate</name>
        <dbReference type="ChEBI" id="CHEBI:58830"/>
    </ligand>
</feature>
<feature type="binding site" evidence="1">
    <location>
        <position position="114"/>
    </location>
    <ligand>
        <name>5-amino-6-(D-ribitylamino)uracil</name>
        <dbReference type="ChEBI" id="CHEBI:15934"/>
    </ligand>
</feature>
<feature type="binding site" evidence="1">
    <location>
        <position position="128"/>
    </location>
    <ligand>
        <name>(2S)-2-hydroxy-3-oxobutyl phosphate</name>
        <dbReference type="ChEBI" id="CHEBI:58830"/>
    </ligand>
</feature>
<sequence>MNVIEGGVAAPNAKIAIVISRFNSFINESLLSGAIDTLKRFGQVSEENITVVRCPGAVELPLVAQRVAKTAKYDAIVSLGSVIRGGTPHFDYVCSECNKGLAQVSLEYSIPVAFGVLTVDTIDQAIERAGTKAGNKGAEAALSALEMINVLSQIES</sequence>
<reference key="1">
    <citation type="journal article" date="2002" name="Eur. J. Biochem.">
        <title>Stimulated biosynthesis of flavins in Photobacterium phosphoreum IFO 13896 and the presence of complete rib operons in two species of luminous bacteria.</title>
        <authorList>
            <person name="Kasai S."/>
            <person name="Sumimoto T."/>
        </authorList>
    </citation>
    <scope>NUCLEOTIDE SEQUENCE [GENOMIC DNA]</scope>
    <source>
        <strain>ATCC 7744 / DSM 507 / NCIMB 1281 / 398</strain>
    </source>
</reference>
<comment type="function">
    <text evidence="1">Catalyzes the formation of 6,7-dimethyl-8-ribityllumazine by condensation of 5-amino-6-(D-ribitylamino)uracil with 3,4-dihydroxy-2-butanone 4-phosphate. This is the penultimate step in the biosynthesis of riboflavin.</text>
</comment>
<comment type="catalytic activity">
    <reaction evidence="1">
        <text>(2S)-2-hydroxy-3-oxobutyl phosphate + 5-amino-6-(D-ribitylamino)uracil = 6,7-dimethyl-8-(1-D-ribityl)lumazine + phosphate + 2 H2O + H(+)</text>
        <dbReference type="Rhea" id="RHEA:26152"/>
        <dbReference type="ChEBI" id="CHEBI:15377"/>
        <dbReference type="ChEBI" id="CHEBI:15378"/>
        <dbReference type="ChEBI" id="CHEBI:15934"/>
        <dbReference type="ChEBI" id="CHEBI:43474"/>
        <dbReference type="ChEBI" id="CHEBI:58201"/>
        <dbReference type="ChEBI" id="CHEBI:58830"/>
        <dbReference type="EC" id="2.5.1.78"/>
    </reaction>
</comment>
<comment type="pathway">
    <text evidence="1">Cofactor biosynthesis; riboflavin biosynthesis; riboflavin from 2-hydroxy-3-oxobutyl phosphate and 5-amino-6-(D-ribitylamino)uracil: step 1/2.</text>
</comment>
<comment type="subunit">
    <text evidence="1">Forms an icosahedral capsid composed of 60 subunits, arranged as a dodecamer of pentamers.</text>
</comment>
<comment type="similarity">
    <text evidence="1">Belongs to the DMRL synthase family.</text>
</comment>
<gene>
    <name evidence="1" type="primary">ribH</name>
    <name type="synonym">ribE</name>
</gene>
<accession>Q8G9G4</accession>
<dbReference type="EC" id="2.5.1.78" evidence="1"/>
<dbReference type="EMBL" id="AB076605">
    <property type="protein sequence ID" value="BAC44860.1"/>
    <property type="molecule type" value="Genomic_DNA"/>
</dbReference>
<dbReference type="RefSeq" id="WP_005418092.1">
    <property type="nucleotide sequence ID" value="NZ_WOBZ01000001.1"/>
</dbReference>
<dbReference type="SMR" id="Q8G9G4"/>
<dbReference type="GeneID" id="54163358"/>
<dbReference type="OMA" id="CQGVTQG"/>
<dbReference type="UniPathway" id="UPA00275">
    <property type="reaction ID" value="UER00404"/>
</dbReference>
<dbReference type="GO" id="GO:0005829">
    <property type="term" value="C:cytosol"/>
    <property type="evidence" value="ECO:0007669"/>
    <property type="project" value="TreeGrafter"/>
</dbReference>
<dbReference type="GO" id="GO:0009349">
    <property type="term" value="C:riboflavin synthase complex"/>
    <property type="evidence" value="ECO:0007669"/>
    <property type="project" value="InterPro"/>
</dbReference>
<dbReference type="GO" id="GO:0000906">
    <property type="term" value="F:6,7-dimethyl-8-ribityllumazine synthase activity"/>
    <property type="evidence" value="ECO:0007669"/>
    <property type="project" value="UniProtKB-UniRule"/>
</dbReference>
<dbReference type="GO" id="GO:0009231">
    <property type="term" value="P:riboflavin biosynthetic process"/>
    <property type="evidence" value="ECO:0007669"/>
    <property type="project" value="UniProtKB-UniRule"/>
</dbReference>
<dbReference type="CDD" id="cd09209">
    <property type="entry name" value="Lumazine_synthase-I"/>
    <property type="match status" value="1"/>
</dbReference>
<dbReference type="FunFam" id="3.40.50.960:FF:000001">
    <property type="entry name" value="6,7-dimethyl-8-ribityllumazine synthase"/>
    <property type="match status" value="1"/>
</dbReference>
<dbReference type="Gene3D" id="3.40.50.960">
    <property type="entry name" value="Lumazine/riboflavin synthase"/>
    <property type="match status" value="1"/>
</dbReference>
<dbReference type="HAMAP" id="MF_00178">
    <property type="entry name" value="Lumazine_synth"/>
    <property type="match status" value="1"/>
</dbReference>
<dbReference type="InterPro" id="IPR034964">
    <property type="entry name" value="LS"/>
</dbReference>
<dbReference type="InterPro" id="IPR002180">
    <property type="entry name" value="LS/RS"/>
</dbReference>
<dbReference type="InterPro" id="IPR036467">
    <property type="entry name" value="LS/RS_sf"/>
</dbReference>
<dbReference type="NCBIfam" id="TIGR00114">
    <property type="entry name" value="lumazine-synth"/>
    <property type="match status" value="1"/>
</dbReference>
<dbReference type="NCBIfam" id="NF000812">
    <property type="entry name" value="PRK00061.1-4"/>
    <property type="match status" value="1"/>
</dbReference>
<dbReference type="PANTHER" id="PTHR21058:SF0">
    <property type="entry name" value="6,7-DIMETHYL-8-RIBITYLLUMAZINE SYNTHASE"/>
    <property type="match status" value="1"/>
</dbReference>
<dbReference type="PANTHER" id="PTHR21058">
    <property type="entry name" value="6,7-DIMETHYL-8-RIBITYLLUMAZINE SYNTHASE DMRL SYNTHASE LUMAZINE SYNTHASE"/>
    <property type="match status" value="1"/>
</dbReference>
<dbReference type="Pfam" id="PF00885">
    <property type="entry name" value="DMRL_synthase"/>
    <property type="match status" value="1"/>
</dbReference>
<dbReference type="SUPFAM" id="SSF52121">
    <property type="entry name" value="Lumazine synthase"/>
    <property type="match status" value="1"/>
</dbReference>